<keyword id="KW-1185">Reference proteome</keyword>
<keyword id="KW-0687">Ribonucleoprotein</keyword>
<keyword id="KW-0689">Ribosomal protein</keyword>
<keyword id="KW-0694">RNA-binding</keyword>
<keyword id="KW-0699">rRNA-binding</keyword>
<comment type="function">
    <text evidence="1">Binds the lower part of the 30S subunit head. Binds mRNA in the 70S ribosome, positioning it for translation.</text>
</comment>
<comment type="subunit">
    <text evidence="1">Part of the 30S ribosomal subunit. Forms a tight complex with proteins S10 and S14.</text>
</comment>
<comment type="similarity">
    <text evidence="1">Belongs to the universal ribosomal protein uS3 family.</text>
</comment>
<feature type="chain" id="PRO_1000086087" description="Small ribosomal subunit protein uS3">
    <location>
        <begin position="1"/>
        <end position="234"/>
    </location>
</feature>
<feature type="domain" description="KH type-2" evidence="1">
    <location>
        <begin position="39"/>
        <end position="107"/>
    </location>
</feature>
<feature type="region of interest" description="Disordered" evidence="2">
    <location>
        <begin position="213"/>
        <end position="234"/>
    </location>
</feature>
<feature type="compositionally biased region" description="Basic and acidic residues" evidence="2">
    <location>
        <begin position="213"/>
        <end position="222"/>
    </location>
</feature>
<feature type="compositionally biased region" description="Basic residues" evidence="2">
    <location>
        <begin position="223"/>
        <end position="234"/>
    </location>
</feature>
<proteinExistence type="inferred from homology"/>
<protein>
    <recommendedName>
        <fullName evidence="1">Small ribosomal subunit protein uS3</fullName>
    </recommendedName>
    <alternativeName>
        <fullName evidence="3">30S ribosomal protein S3</fullName>
    </alternativeName>
</protein>
<evidence type="ECO:0000255" key="1">
    <source>
        <dbReference type="HAMAP-Rule" id="MF_01309"/>
    </source>
</evidence>
<evidence type="ECO:0000256" key="2">
    <source>
        <dbReference type="SAM" id="MobiDB-lite"/>
    </source>
</evidence>
<evidence type="ECO:0000305" key="3"/>
<gene>
    <name evidence="1" type="primary">rpsC</name>
    <name type="ordered locus">Abu_0758</name>
</gene>
<sequence length="234" mass="26181">MGQKVNPIGLRLGINRNWESRWFPKFETMPANVAEDDKIRKYVKKELYYAGIAQTVVERTAKKVRVTVVAARPGIIIGKKGADVEKLKDALSKLVGKEIAVNIKEERKPQISAQLSAENVAQQLERRVAFRRAMKRVMQNALKGGAKGIKVSVSGRLGGAEMARTEWYLEGRVPLHTLRARIDYGFAEAHTTYGCIGIKVWIFKGEVLAKGIPTEKAEETTSKPKRRPAKKRGK</sequence>
<accession>A8ESU9</accession>
<reference key="1">
    <citation type="journal article" date="2007" name="PLoS ONE">
        <title>The complete genome sequence and analysis of the Epsilonproteobacterium Arcobacter butzleri.</title>
        <authorList>
            <person name="Miller W.G."/>
            <person name="Parker C.T."/>
            <person name="Rubenfield M."/>
            <person name="Mendz G.L."/>
            <person name="Woesten M.M.S.M."/>
            <person name="Ussery D.W."/>
            <person name="Stolz J.F."/>
            <person name="Binnewies T.T."/>
            <person name="Hallin P.F."/>
            <person name="Wang G."/>
            <person name="Malek J.A."/>
            <person name="Rogosin A."/>
            <person name="Stanker L.H."/>
            <person name="Mandrell R.E."/>
        </authorList>
    </citation>
    <scope>NUCLEOTIDE SEQUENCE [LARGE SCALE GENOMIC DNA]</scope>
    <source>
        <strain>RM4018</strain>
    </source>
</reference>
<dbReference type="EMBL" id="CP000361">
    <property type="protein sequence ID" value="ABV67023.1"/>
    <property type="molecule type" value="Genomic_DNA"/>
</dbReference>
<dbReference type="RefSeq" id="WP_004510826.1">
    <property type="nucleotide sequence ID" value="NC_009850.1"/>
</dbReference>
<dbReference type="SMR" id="A8ESU9"/>
<dbReference type="STRING" id="367737.Abu_0758"/>
<dbReference type="GeneID" id="24304522"/>
<dbReference type="KEGG" id="abu:Abu_0758"/>
<dbReference type="eggNOG" id="COG0092">
    <property type="taxonomic scope" value="Bacteria"/>
</dbReference>
<dbReference type="HOGENOM" id="CLU_058591_0_2_7"/>
<dbReference type="Proteomes" id="UP000001136">
    <property type="component" value="Chromosome"/>
</dbReference>
<dbReference type="GO" id="GO:0022627">
    <property type="term" value="C:cytosolic small ribosomal subunit"/>
    <property type="evidence" value="ECO:0007669"/>
    <property type="project" value="TreeGrafter"/>
</dbReference>
<dbReference type="GO" id="GO:0003729">
    <property type="term" value="F:mRNA binding"/>
    <property type="evidence" value="ECO:0007669"/>
    <property type="project" value="UniProtKB-UniRule"/>
</dbReference>
<dbReference type="GO" id="GO:0019843">
    <property type="term" value="F:rRNA binding"/>
    <property type="evidence" value="ECO:0007669"/>
    <property type="project" value="UniProtKB-UniRule"/>
</dbReference>
<dbReference type="GO" id="GO:0003735">
    <property type="term" value="F:structural constituent of ribosome"/>
    <property type="evidence" value="ECO:0007669"/>
    <property type="project" value="InterPro"/>
</dbReference>
<dbReference type="GO" id="GO:0006412">
    <property type="term" value="P:translation"/>
    <property type="evidence" value="ECO:0007669"/>
    <property type="project" value="UniProtKB-UniRule"/>
</dbReference>
<dbReference type="CDD" id="cd02412">
    <property type="entry name" value="KH-II_30S_S3"/>
    <property type="match status" value="1"/>
</dbReference>
<dbReference type="FunFam" id="3.30.1140.32:FF:000006">
    <property type="entry name" value="30S ribosomal protein S3"/>
    <property type="match status" value="1"/>
</dbReference>
<dbReference type="FunFam" id="3.30.300.20:FF:000001">
    <property type="entry name" value="30S ribosomal protein S3"/>
    <property type="match status" value="1"/>
</dbReference>
<dbReference type="Gene3D" id="3.30.300.20">
    <property type="match status" value="1"/>
</dbReference>
<dbReference type="Gene3D" id="3.30.1140.32">
    <property type="entry name" value="Ribosomal protein S3, C-terminal domain"/>
    <property type="match status" value="1"/>
</dbReference>
<dbReference type="HAMAP" id="MF_01309_B">
    <property type="entry name" value="Ribosomal_uS3_B"/>
    <property type="match status" value="1"/>
</dbReference>
<dbReference type="InterPro" id="IPR004087">
    <property type="entry name" value="KH_dom"/>
</dbReference>
<dbReference type="InterPro" id="IPR015946">
    <property type="entry name" value="KH_dom-like_a/b"/>
</dbReference>
<dbReference type="InterPro" id="IPR004044">
    <property type="entry name" value="KH_dom_type_2"/>
</dbReference>
<dbReference type="InterPro" id="IPR009019">
    <property type="entry name" value="KH_sf_prok-type"/>
</dbReference>
<dbReference type="InterPro" id="IPR036419">
    <property type="entry name" value="Ribosomal_S3_C_sf"/>
</dbReference>
<dbReference type="InterPro" id="IPR005704">
    <property type="entry name" value="Ribosomal_uS3_bac-typ"/>
</dbReference>
<dbReference type="InterPro" id="IPR001351">
    <property type="entry name" value="Ribosomal_uS3_C"/>
</dbReference>
<dbReference type="InterPro" id="IPR018280">
    <property type="entry name" value="Ribosomal_uS3_CS"/>
</dbReference>
<dbReference type="NCBIfam" id="TIGR01009">
    <property type="entry name" value="rpsC_bact"/>
    <property type="match status" value="1"/>
</dbReference>
<dbReference type="PANTHER" id="PTHR11760">
    <property type="entry name" value="30S/40S RIBOSOMAL PROTEIN S3"/>
    <property type="match status" value="1"/>
</dbReference>
<dbReference type="PANTHER" id="PTHR11760:SF19">
    <property type="entry name" value="SMALL RIBOSOMAL SUBUNIT PROTEIN US3C"/>
    <property type="match status" value="1"/>
</dbReference>
<dbReference type="Pfam" id="PF07650">
    <property type="entry name" value="KH_2"/>
    <property type="match status" value="1"/>
</dbReference>
<dbReference type="Pfam" id="PF00189">
    <property type="entry name" value="Ribosomal_S3_C"/>
    <property type="match status" value="1"/>
</dbReference>
<dbReference type="SMART" id="SM00322">
    <property type="entry name" value="KH"/>
    <property type="match status" value="1"/>
</dbReference>
<dbReference type="SUPFAM" id="SSF54814">
    <property type="entry name" value="Prokaryotic type KH domain (KH-domain type II)"/>
    <property type="match status" value="1"/>
</dbReference>
<dbReference type="SUPFAM" id="SSF54821">
    <property type="entry name" value="Ribosomal protein S3 C-terminal domain"/>
    <property type="match status" value="1"/>
</dbReference>
<dbReference type="PROSITE" id="PS50823">
    <property type="entry name" value="KH_TYPE_2"/>
    <property type="match status" value="1"/>
</dbReference>
<dbReference type="PROSITE" id="PS00548">
    <property type="entry name" value="RIBOSOMAL_S3"/>
    <property type="match status" value="1"/>
</dbReference>
<organism>
    <name type="scientific">Aliarcobacter butzleri (strain RM4018)</name>
    <name type="common">Arcobacter butzleri</name>
    <dbReference type="NCBI Taxonomy" id="367737"/>
    <lineage>
        <taxon>Bacteria</taxon>
        <taxon>Pseudomonadati</taxon>
        <taxon>Campylobacterota</taxon>
        <taxon>Epsilonproteobacteria</taxon>
        <taxon>Campylobacterales</taxon>
        <taxon>Arcobacteraceae</taxon>
        <taxon>Aliarcobacter</taxon>
    </lineage>
</organism>
<name>RS3_ALIB4</name>